<accession>A6KXH3</accession>
<protein>
    <recommendedName>
        <fullName evidence="1">DNA mismatch repair protein MutL</fullName>
    </recommendedName>
</protein>
<proteinExistence type="inferred from homology"/>
<name>MUTL_PHOV8</name>
<gene>
    <name evidence="1" type="primary">mutL</name>
    <name type="ordered locus">BVU_0422</name>
</gene>
<comment type="function">
    <text evidence="1">This protein is involved in the repair of mismatches in DNA. It is required for dam-dependent methyl-directed DNA mismatch repair. May act as a 'molecular matchmaker', a protein that promotes the formation of a stable complex between two or more DNA-binding proteins in an ATP-dependent manner without itself being part of a final effector complex.</text>
</comment>
<comment type="similarity">
    <text evidence="1">Belongs to the DNA mismatch repair MutL/HexB family.</text>
</comment>
<dbReference type="EMBL" id="CP000139">
    <property type="protein sequence ID" value="ABR38137.1"/>
    <property type="molecule type" value="Genomic_DNA"/>
</dbReference>
<dbReference type="RefSeq" id="WP_005840196.1">
    <property type="nucleotide sequence ID" value="NZ_JANSWM010000030.1"/>
</dbReference>
<dbReference type="SMR" id="A6KXH3"/>
<dbReference type="STRING" id="435590.BVU_0422"/>
<dbReference type="PaxDb" id="435590-BVU_0422"/>
<dbReference type="GeneID" id="5301391"/>
<dbReference type="KEGG" id="bvu:BVU_0422"/>
<dbReference type="eggNOG" id="COG0323">
    <property type="taxonomic scope" value="Bacteria"/>
</dbReference>
<dbReference type="HOGENOM" id="CLU_004131_4_1_10"/>
<dbReference type="BioCyc" id="BVUL435590:G1G59-442-MONOMER"/>
<dbReference type="Proteomes" id="UP000002861">
    <property type="component" value="Chromosome"/>
</dbReference>
<dbReference type="GO" id="GO:0032300">
    <property type="term" value="C:mismatch repair complex"/>
    <property type="evidence" value="ECO:0007669"/>
    <property type="project" value="InterPro"/>
</dbReference>
<dbReference type="GO" id="GO:0005524">
    <property type="term" value="F:ATP binding"/>
    <property type="evidence" value="ECO:0007669"/>
    <property type="project" value="InterPro"/>
</dbReference>
<dbReference type="GO" id="GO:0016887">
    <property type="term" value="F:ATP hydrolysis activity"/>
    <property type="evidence" value="ECO:0007669"/>
    <property type="project" value="InterPro"/>
</dbReference>
<dbReference type="GO" id="GO:0140664">
    <property type="term" value="F:ATP-dependent DNA damage sensor activity"/>
    <property type="evidence" value="ECO:0007669"/>
    <property type="project" value="InterPro"/>
</dbReference>
<dbReference type="GO" id="GO:0030983">
    <property type="term" value="F:mismatched DNA binding"/>
    <property type="evidence" value="ECO:0007669"/>
    <property type="project" value="InterPro"/>
</dbReference>
<dbReference type="GO" id="GO:0006298">
    <property type="term" value="P:mismatch repair"/>
    <property type="evidence" value="ECO:0007669"/>
    <property type="project" value="UniProtKB-UniRule"/>
</dbReference>
<dbReference type="CDD" id="cd16926">
    <property type="entry name" value="HATPase_MutL-MLH-PMS-like"/>
    <property type="match status" value="1"/>
</dbReference>
<dbReference type="CDD" id="cd00782">
    <property type="entry name" value="MutL_Trans"/>
    <property type="match status" value="1"/>
</dbReference>
<dbReference type="FunFam" id="3.30.565.10:FF:000003">
    <property type="entry name" value="DNA mismatch repair endonuclease MutL"/>
    <property type="match status" value="1"/>
</dbReference>
<dbReference type="Gene3D" id="3.30.230.10">
    <property type="match status" value="1"/>
</dbReference>
<dbReference type="Gene3D" id="3.30.565.10">
    <property type="entry name" value="Histidine kinase-like ATPase, C-terminal domain"/>
    <property type="match status" value="1"/>
</dbReference>
<dbReference type="Gene3D" id="3.30.1540.20">
    <property type="entry name" value="MutL, C-terminal domain, dimerisation subdomain"/>
    <property type="match status" value="1"/>
</dbReference>
<dbReference type="Gene3D" id="3.30.1370.100">
    <property type="entry name" value="MutL, C-terminal domain, regulatory subdomain"/>
    <property type="match status" value="1"/>
</dbReference>
<dbReference type="HAMAP" id="MF_00149">
    <property type="entry name" value="DNA_mis_repair"/>
    <property type="match status" value="1"/>
</dbReference>
<dbReference type="InterPro" id="IPR014762">
    <property type="entry name" value="DNA_mismatch_repair_CS"/>
</dbReference>
<dbReference type="InterPro" id="IPR020667">
    <property type="entry name" value="DNA_mismatch_repair_MutL"/>
</dbReference>
<dbReference type="InterPro" id="IPR013507">
    <property type="entry name" value="DNA_mismatch_S5_2-like"/>
</dbReference>
<dbReference type="InterPro" id="IPR036890">
    <property type="entry name" value="HATPase_C_sf"/>
</dbReference>
<dbReference type="InterPro" id="IPR002099">
    <property type="entry name" value="MutL/Mlh/PMS"/>
</dbReference>
<dbReference type="InterPro" id="IPR038973">
    <property type="entry name" value="MutL/Mlh/Pms-like"/>
</dbReference>
<dbReference type="InterPro" id="IPR014790">
    <property type="entry name" value="MutL_C"/>
</dbReference>
<dbReference type="InterPro" id="IPR042120">
    <property type="entry name" value="MutL_C_dimsub"/>
</dbReference>
<dbReference type="InterPro" id="IPR042121">
    <property type="entry name" value="MutL_C_regsub"/>
</dbReference>
<dbReference type="InterPro" id="IPR037198">
    <property type="entry name" value="MutL_C_sf"/>
</dbReference>
<dbReference type="InterPro" id="IPR020568">
    <property type="entry name" value="Ribosomal_Su5_D2-typ_SF"/>
</dbReference>
<dbReference type="InterPro" id="IPR014721">
    <property type="entry name" value="Ribsml_uS5_D2-typ_fold_subgr"/>
</dbReference>
<dbReference type="NCBIfam" id="TIGR00585">
    <property type="entry name" value="mutl"/>
    <property type="match status" value="1"/>
</dbReference>
<dbReference type="PANTHER" id="PTHR10073">
    <property type="entry name" value="DNA MISMATCH REPAIR PROTEIN MLH, PMS, MUTL"/>
    <property type="match status" value="1"/>
</dbReference>
<dbReference type="PANTHER" id="PTHR10073:SF12">
    <property type="entry name" value="DNA MISMATCH REPAIR PROTEIN MLH1"/>
    <property type="match status" value="1"/>
</dbReference>
<dbReference type="Pfam" id="PF01119">
    <property type="entry name" value="DNA_mis_repair"/>
    <property type="match status" value="1"/>
</dbReference>
<dbReference type="Pfam" id="PF13589">
    <property type="entry name" value="HATPase_c_3"/>
    <property type="match status" value="1"/>
</dbReference>
<dbReference type="Pfam" id="PF08676">
    <property type="entry name" value="MutL_C"/>
    <property type="match status" value="1"/>
</dbReference>
<dbReference type="SMART" id="SM01340">
    <property type="entry name" value="DNA_mis_repair"/>
    <property type="match status" value="1"/>
</dbReference>
<dbReference type="SMART" id="SM00853">
    <property type="entry name" value="MutL_C"/>
    <property type="match status" value="1"/>
</dbReference>
<dbReference type="SUPFAM" id="SSF55874">
    <property type="entry name" value="ATPase domain of HSP90 chaperone/DNA topoisomerase II/histidine kinase"/>
    <property type="match status" value="1"/>
</dbReference>
<dbReference type="SUPFAM" id="SSF118116">
    <property type="entry name" value="DNA mismatch repair protein MutL"/>
    <property type="match status" value="1"/>
</dbReference>
<dbReference type="SUPFAM" id="SSF54211">
    <property type="entry name" value="Ribosomal protein S5 domain 2-like"/>
    <property type="match status" value="1"/>
</dbReference>
<dbReference type="PROSITE" id="PS00058">
    <property type="entry name" value="DNA_MISMATCH_REPAIR_1"/>
    <property type="match status" value="1"/>
</dbReference>
<keyword id="KW-0227">DNA damage</keyword>
<keyword id="KW-0234">DNA repair</keyword>
<organism>
    <name type="scientific">Phocaeicola vulgatus (strain ATCC 8482 / DSM 1447 / JCM 5826 / CCUG 4940 / NBRC 14291 / NCTC 11154)</name>
    <name type="common">Bacteroides vulgatus</name>
    <dbReference type="NCBI Taxonomy" id="435590"/>
    <lineage>
        <taxon>Bacteria</taxon>
        <taxon>Pseudomonadati</taxon>
        <taxon>Bacteroidota</taxon>
        <taxon>Bacteroidia</taxon>
        <taxon>Bacteroidales</taxon>
        <taxon>Bacteroidaceae</taxon>
        <taxon>Phocaeicola</taxon>
    </lineage>
</organism>
<feature type="chain" id="PRO_1000058137" description="DNA mismatch repair protein MutL">
    <location>
        <begin position="1"/>
        <end position="622"/>
    </location>
</feature>
<feature type="region of interest" description="Disordered" evidence="2">
    <location>
        <begin position="399"/>
        <end position="422"/>
    </location>
</feature>
<feature type="compositionally biased region" description="Basic and acidic residues" evidence="2">
    <location>
        <begin position="399"/>
        <end position="414"/>
    </location>
</feature>
<evidence type="ECO:0000255" key="1">
    <source>
        <dbReference type="HAMAP-Rule" id="MF_00149"/>
    </source>
</evidence>
<evidence type="ECO:0000256" key="2">
    <source>
        <dbReference type="SAM" id="MobiDB-lite"/>
    </source>
</evidence>
<sequence length="622" mass="68713">MSDIIRLLPDSVANQIAAGEVIQRPASVIKELVENAIDAGAQHVDVLVVDAGKTSIQVIDDGKGMSETDARLSFERHATSKIREAADLFALHTMGFRGEALASIAAVAQVELRTRMEGEELGTMLTISGSKVEGQEAVSCPKGSSFSVKNLFFNVPARRKFLKSNQTELSNILTEFERIVLVNPEVSFTLHHNGAELFNLPALQLRQRIMGVFGKKINQELLSLDVDTTMVRVSGFVGKPETARKKGARQYFFVNGRYMRHPYFHKAIMDAYEQLVPVGEQVSYFIYFEVDPANIDVNIHPTKTEIKFENEQAIWQILAAAVKETLGKFNAVPSIDFDTEGMPDIPAFDASPYTGIQPPKTTYNPDYNPFNVSAAPPSSYSKPSKDWEQLYAGLERHASSQNFHPDENDYRAEEASPAEENPGLYDHVEDSSVSEKSGQHYQFKGRFILTSVKSGLMIIDQQRAHIRILYDKYIDQISRRQGVSQGMLFPDIVQFPLSEVAILQEIMEDLSFLGFELTDLGGGSYAINGVPAGIEGLNPIDLIQNMVHTAMEKGGKVKEEVQSILALTLAKAAAIVPGQVLTNEEMTGLVDGLFAVATPNYTPDGKTVLSVINEDDLEKLFK</sequence>
<reference key="1">
    <citation type="journal article" date="2007" name="PLoS Biol.">
        <title>Evolution of symbiotic bacteria in the distal human intestine.</title>
        <authorList>
            <person name="Xu J."/>
            <person name="Mahowald M.A."/>
            <person name="Ley R.E."/>
            <person name="Lozupone C.A."/>
            <person name="Hamady M."/>
            <person name="Martens E.C."/>
            <person name="Henrissat B."/>
            <person name="Coutinho P.M."/>
            <person name="Minx P."/>
            <person name="Latreille P."/>
            <person name="Cordum H."/>
            <person name="Van Brunt A."/>
            <person name="Kim K."/>
            <person name="Fulton R.S."/>
            <person name="Fulton L.A."/>
            <person name="Clifton S.W."/>
            <person name="Wilson R.K."/>
            <person name="Knight R.D."/>
            <person name="Gordon J.I."/>
        </authorList>
    </citation>
    <scope>NUCLEOTIDE SEQUENCE [LARGE SCALE GENOMIC DNA]</scope>
    <source>
        <strain>ATCC 8482 / DSM 1447 / JCM 5826 / CCUG 4940 / NBRC 14291 / NCTC 11154</strain>
    </source>
</reference>